<name>RS20_VIBA3</name>
<accession>B7VJ84</accession>
<feature type="chain" id="PRO_1000194275" description="Small ribosomal subunit protein bS20">
    <location>
        <begin position="1"/>
        <end position="86"/>
    </location>
</feature>
<feature type="region of interest" description="Disordered" evidence="2">
    <location>
        <begin position="1"/>
        <end position="27"/>
    </location>
</feature>
<organism>
    <name type="scientific">Vibrio atlanticus (strain LGP32)</name>
    <name type="common">Vibrio splendidus (strain Mel32)</name>
    <dbReference type="NCBI Taxonomy" id="575788"/>
    <lineage>
        <taxon>Bacteria</taxon>
        <taxon>Pseudomonadati</taxon>
        <taxon>Pseudomonadota</taxon>
        <taxon>Gammaproteobacteria</taxon>
        <taxon>Vibrionales</taxon>
        <taxon>Vibrionaceae</taxon>
        <taxon>Vibrio</taxon>
    </lineage>
</organism>
<gene>
    <name evidence="1" type="primary">rpsT</name>
    <name type="ordered locus">VS_0533</name>
</gene>
<keyword id="KW-0687">Ribonucleoprotein</keyword>
<keyword id="KW-0689">Ribosomal protein</keyword>
<keyword id="KW-0694">RNA-binding</keyword>
<keyword id="KW-0699">rRNA-binding</keyword>
<proteinExistence type="inferred from homology"/>
<reference key="1">
    <citation type="submission" date="2009-02" db="EMBL/GenBank/DDBJ databases">
        <title>Vibrio splendidus str. LGP32 complete genome.</title>
        <authorList>
            <person name="Mazel D."/>
            <person name="Le Roux F."/>
        </authorList>
    </citation>
    <scope>NUCLEOTIDE SEQUENCE [LARGE SCALE GENOMIC DNA]</scope>
    <source>
        <strain>LGP32</strain>
    </source>
</reference>
<protein>
    <recommendedName>
        <fullName evidence="1">Small ribosomal subunit protein bS20</fullName>
    </recommendedName>
    <alternativeName>
        <fullName evidence="3">30S ribosomal protein S20</fullName>
    </alternativeName>
</protein>
<dbReference type="EMBL" id="FM954972">
    <property type="protein sequence ID" value="CAV17538.1"/>
    <property type="molecule type" value="Genomic_DNA"/>
</dbReference>
<dbReference type="SMR" id="B7VJ84"/>
<dbReference type="STRING" id="575788.VS_0533"/>
<dbReference type="KEGG" id="vsp:VS_0533"/>
<dbReference type="eggNOG" id="COG0268">
    <property type="taxonomic scope" value="Bacteria"/>
</dbReference>
<dbReference type="HOGENOM" id="CLU_160655_4_0_6"/>
<dbReference type="Proteomes" id="UP000009100">
    <property type="component" value="Chromosome 1"/>
</dbReference>
<dbReference type="GO" id="GO:0005829">
    <property type="term" value="C:cytosol"/>
    <property type="evidence" value="ECO:0007669"/>
    <property type="project" value="TreeGrafter"/>
</dbReference>
<dbReference type="GO" id="GO:0015935">
    <property type="term" value="C:small ribosomal subunit"/>
    <property type="evidence" value="ECO:0007669"/>
    <property type="project" value="TreeGrafter"/>
</dbReference>
<dbReference type="GO" id="GO:0070181">
    <property type="term" value="F:small ribosomal subunit rRNA binding"/>
    <property type="evidence" value="ECO:0007669"/>
    <property type="project" value="TreeGrafter"/>
</dbReference>
<dbReference type="GO" id="GO:0003735">
    <property type="term" value="F:structural constituent of ribosome"/>
    <property type="evidence" value="ECO:0007669"/>
    <property type="project" value="InterPro"/>
</dbReference>
<dbReference type="GO" id="GO:0006412">
    <property type="term" value="P:translation"/>
    <property type="evidence" value="ECO:0007669"/>
    <property type="project" value="UniProtKB-UniRule"/>
</dbReference>
<dbReference type="FunFam" id="1.20.58.110:FF:000001">
    <property type="entry name" value="30S ribosomal protein S20"/>
    <property type="match status" value="1"/>
</dbReference>
<dbReference type="Gene3D" id="1.20.58.110">
    <property type="entry name" value="Ribosomal protein S20"/>
    <property type="match status" value="1"/>
</dbReference>
<dbReference type="HAMAP" id="MF_00500">
    <property type="entry name" value="Ribosomal_bS20"/>
    <property type="match status" value="1"/>
</dbReference>
<dbReference type="InterPro" id="IPR002583">
    <property type="entry name" value="Ribosomal_bS20"/>
</dbReference>
<dbReference type="InterPro" id="IPR036510">
    <property type="entry name" value="Ribosomal_bS20_sf"/>
</dbReference>
<dbReference type="NCBIfam" id="TIGR00029">
    <property type="entry name" value="S20"/>
    <property type="match status" value="1"/>
</dbReference>
<dbReference type="PANTHER" id="PTHR33398">
    <property type="entry name" value="30S RIBOSOMAL PROTEIN S20"/>
    <property type="match status" value="1"/>
</dbReference>
<dbReference type="PANTHER" id="PTHR33398:SF1">
    <property type="entry name" value="SMALL RIBOSOMAL SUBUNIT PROTEIN BS20C"/>
    <property type="match status" value="1"/>
</dbReference>
<dbReference type="Pfam" id="PF01649">
    <property type="entry name" value="Ribosomal_S20p"/>
    <property type="match status" value="1"/>
</dbReference>
<dbReference type="SUPFAM" id="SSF46992">
    <property type="entry name" value="Ribosomal protein S20"/>
    <property type="match status" value="1"/>
</dbReference>
<comment type="function">
    <text evidence="1">Binds directly to 16S ribosomal RNA.</text>
</comment>
<comment type="similarity">
    <text evidence="1">Belongs to the bacterial ribosomal protein bS20 family.</text>
</comment>
<sequence length="86" mass="9516">MANSKSAKKRAIQAEKRRQHNASRRSMMRTYMKKTIAAIEAGNKEAATAALVEVTPLLDRMATKGLIHKNKAARHKSRFAAAIKAL</sequence>
<evidence type="ECO:0000255" key="1">
    <source>
        <dbReference type="HAMAP-Rule" id="MF_00500"/>
    </source>
</evidence>
<evidence type="ECO:0000256" key="2">
    <source>
        <dbReference type="SAM" id="MobiDB-lite"/>
    </source>
</evidence>
<evidence type="ECO:0000305" key="3"/>